<name>RS17_DINSH</name>
<organism>
    <name type="scientific">Dinoroseobacter shibae (strain DSM 16493 / NCIMB 14021 / DFL 12)</name>
    <dbReference type="NCBI Taxonomy" id="398580"/>
    <lineage>
        <taxon>Bacteria</taxon>
        <taxon>Pseudomonadati</taxon>
        <taxon>Pseudomonadota</taxon>
        <taxon>Alphaproteobacteria</taxon>
        <taxon>Rhodobacterales</taxon>
        <taxon>Roseobacteraceae</taxon>
        <taxon>Dinoroseobacter</taxon>
    </lineage>
</organism>
<sequence length="76" mass="8680">MPKRILNGVVTSDANAQTVTVSVERRFTHPVLKKTIRKSKKYRAHDAENAFKVGDKVRIQECAPMSKTKRWEVIAN</sequence>
<comment type="function">
    <text evidence="1">One of the primary rRNA binding proteins, it binds specifically to the 5'-end of 16S ribosomal RNA.</text>
</comment>
<comment type="subunit">
    <text evidence="1">Part of the 30S ribosomal subunit.</text>
</comment>
<comment type="similarity">
    <text evidence="1">Belongs to the universal ribosomal protein uS17 family.</text>
</comment>
<proteinExistence type="inferred from homology"/>
<protein>
    <recommendedName>
        <fullName evidence="1">Small ribosomal subunit protein uS17</fullName>
    </recommendedName>
    <alternativeName>
        <fullName evidence="2">30S ribosomal protein S17</fullName>
    </alternativeName>
</protein>
<feature type="chain" id="PRO_1000086839" description="Small ribosomal subunit protein uS17">
    <location>
        <begin position="1"/>
        <end position="76"/>
    </location>
</feature>
<accession>A8LM66</accession>
<gene>
    <name evidence="1" type="primary">rpsQ</name>
    <name type="ordered locus">Dshi_0294</name>
</gene>
<dbReference type="EMBL" id="CP000830">
    <property type="protein sequence ID" value="ABV92043.1"/>
    <property type="molecule type" value="Genomic_DNA"/>
</dbReference>
<dbReference type="RefSeq" id="WP_012176974.1">
    <property type="nucleotide sequence ID" value="NC_009952.1"/>
</dbReference>
<dbReference type="SMR" id="A8LM66"/>
<dbReference type="STRING" id="398580.Dshi_0294"/>
<dbReference type="KEGG" id="dsh:Dshi_0294"/>
<dbReference type="eggNOG" id="COG0186">
    <property type="taxonomic scope" value="Bacteria"/>
</dbReference>
<dbReference type="HOGENOM" id="CLU_073626_1_1_5"/>
<dbReference type="OrthoDB" id="9811714at2"/>
<dbReference type="Proteomes" id="UP000006833">
    <property type="component" value="Chromosome"/>
</dbReference>
<dbReference type="GO" id="GO:0022627">
    <property type="term" value="C:cytosolic small ribosomal subunit"/>
    <property type="evidence" value="ECO:0007669"/>
    <property type="project" value="TreeGrafter"/>
</dbReference>
<dbReference type="GO" id="GO:0019843">
    <property type="term" value="F:rRNA binding"/>
    <property type="evidence" value="ECO:0007669"/>
    <property type="project" value="UniProtKB-UniRule"/>
</dbReference>
<dbReference type="GO" id="GO:0003735">
    <property type="term" value="F:structural constituent of ribosome"/>
    <property type="evidence" value="ECO:0007669"/>
    <property type="project" value="InterPro"/>
</dbReference>
<dbReference type="GO" id="GO:0006412">
    <property type="term" value="P:translation"/>
    <property type="evidence" value="ECO:0007669"/>
    <property type="project" value="UniProtKB-UniRule"/>
</dbReference>
<dbReference type="CDD" id="cd00364">
    <property type="entry name" value="Ribosomal_uS17"/>
    <property type="match status" value="1"/>
</dbReference>
<dbReference type="Gene3D" id="2.40.50.140">
    <property type="entry name" value="Nucleic acid-binding proteins"/>
    <property type="match status" value="1"/>
</dbReference>
<dbReference type="HAMAP" id="MF_01345_B">
    <property type="entry name" value="Ribosomal_uS17_B"/>
    <property type="match status" value="1"/>
</dbReference>
<dbReference type="InterPro" id="IPR012340">
    <property type="entry name" value="NA-bd_OB-fold"/>
</dbReference>
<dbReference type="InterPro" id="IPR000266">
    <property type="entry name" value="Ribosomal_uS17"/>
</dbReference>
<dbReference type="InterPro" id="IPR019984">
    <property type="entry name" value="Ribosomal_uS17_bact/chlr"/>
</dbReference>
<dbReference type="NCBIfam" id="NF004123">
    <property type="entry name" value="PRK05610.1"/>
    <property type="match status" value="1"/>
</dbReference>
<dbReference type="NCBIfam" id="TIGR03635">
    <property type="entry name" value="uS17_bact"/>
    <property type="match status" value="1"/>
</dbReference>
<dbReference type="PANTHER" id="PTHR10744">
    <property type="entry name" value="40S RIBOSOMAL PROTEIN S11 FAMILY MEMBER"/>
    <property type="match status" value="1"/>
</dbReference>
<dbReference type="PANTHER" id="PTHR10744:SF1">
    <property type="entry name" value="SMALL RIBOSOMAL SUBUNIT PROTEIN US17M"/>
    <property type="match status" value="1"/>
</dbReference>
<dbReference type="Pfam" id="PF00366">
    <property type="entry name" value="Ribosomal_S17"/>
    <property type="match status" value="1"/>
</dbReference>
<dbReference type="PRINTS" id="PR00973">
    <property type="entry name" value="RIBOSOMALS17"/>
</dbReference>
<dbReference type="SUPFAM" id="SSF50249">
    <property type="entry name" value="Nucleic acid-binding proteins"/>
    <property type="match status" value="1"/>
</dbReference>
<keyword id="KW-1185">Reference proteome</keyword>
<keyword id="KW-0687">Ribonucleoprotein</keyword>
<keyword id="KW-0689">Ribosomal protein</keyword>
<keyword id="KW-0694">RNA-binding</keyword>
<keyword id="KW-0699">rRNA-binding</keyword>
<evidence type="ECO:0000255" key="1">
    <source>
        <dbReference type="HAMAP-Rule" id="MF_01345"/>
    </source>
</evidence>
<evidence type="ECO:0000305" key="2"/>
<reference key="1">
    <citation type="journal article" date="2010" name="ISME J.">
        <title>The complete genome sequence of the algal symbiont Dinoroseobacter shibae: a hitchhiker's guide to life in the sea.</title>
        <authorList>
            <person name="Wagner-Dobler I."/>
            <person name="Ballhausen B."/>
            <person name="Berger M."/>
            <person name="Brinkhoff T."/>
            <person name="Buchholz I."/>
            <person name="Bunk B."/>
            <person name="Cypionka H."/>
            <person name="Daniel R."/>
            <person name="Drepper T."/>
            <person name="Gerdts G."/>
            <person name="Hahnke S."/>
            <person name="Han C."/>
            <person name="Jahn D."/>
            <person name="Kalhoefer D."/>
            <person name="Kiss H."/>
            <person name="Klenk H.P."/>
            <person name="Kyrpides N."/>
            <person name="Liebl W."/>
            <person name="Liesegang H."/>
            <person name="Meincke L."/>
            <person name="Pati A."/>
            <person name="Petersen J."/>
            <person name="Piekarski T."/>
            <person name="Pommerenke C."/>
            <person name="Pradella S."/>
            <person name="Pukall R."/>
            <person name="Rabus R."/>
            <person name="Stackebrandt E."/>
            <person name="Thole S."/>
            <person name="Thompson L."/>
            <person name="Tielen P."/>
            <person name="Tomasch J."/>
            <person name="von Jan M."/>
            <person name="Wanphrut N."/>
            <person name="Wichels A."/>
            <person name="Zech H."/>
            <person name="Simon M."/>
        </authorList>
    </citation>
    <scope>NUCLEOTIDE SEQUENCE [LARGE SCALE GENOMIC DNA]</scope>
    <source>
        <strain>DSM 16493 / NCIMB 14021 / DFL 12</strain>
    </source>
</reference>